<feature type="chain" id="PRO_0000166821" description="Peptide chain release factor 2">
    <location>
        <begin position="1"/>
        <end position="363"/>
    </location>
</feature>
<feature type="modified residue" description="N5-methylglutamine" evidence="1">
    <location>
        <position position="251"/>
    </location>
</feature>
<reference key="1">
    <citation type="journal article" date="1997" name="Nature">
        <title>The complete genome sequence of the gastric pathogen Helicobacter pylori.</title>
        <authorList>
            <person name="Tomb J.-F."/>
            <person name="White O."/>
            <person name="Kerlavage A.R."/>
            <person name="Clayton R.A."/>
            <person name="Sutton G.G."/>
            <person name="Fleischmann R.D."/>
            <person name="Ketchum K.A."/>
            <person name="Klenk H.-P."/>
            <person name="Gill S.R."/>
            <person name="Dougherty B.A."/>
            <person name="Nelson K.E."/>
            <person name="Quackenbush J."/>
            <person name="Zhou L."/>
            <person name="Kirkness E.F."/>
            <person name="Peterson S.N."/>
            <person name="Loftus B.J."/>
            <person name="Richardson D.L."/>
            <person name="Dodson R.J."/>
            <person name="Khalak H.G."/>
            <person name="Glodek A."/>
            <person name="McKenney K."/>
            <person name="FitzGerald L.M."/>
            <person name="Lee N."/>
            <person name="Adams M.D."/>
            <person name="Hickey E.K."/>
            <person name="Berg D.E."/>
            <person name="Gocayne J.D."/>
            <person name="Utterback T.R."/>
            <person name="Peterson J.D."/>
            <person name="Kelley J.M."/>
            <person name="Cotton M.D."/>
            <person name="Weidman J.F."/>
            <person name="Fujii C."/>
            <person name="Bowman C."/>
            <person name="Watthey L."/>
            <person name="Wallin E."/>
            <person name="Hayes W.S."/>
            <person name="Borodovsky M."/>
            <person name="Karp P.D."/>
            <person name="Smith H.O."/>
            <person name="Fraser C.M."/>
            <person name="Venter J.C."/>
        </authorList>
    </citation>
    <scope>NUCLEOTIDE SEQUENCE [LARGE SCALE GENOMIC DNA]</scope>
    <source>
        <strain>ATCC 700392 / 26695</strain>
    </source>
</reference>
<sequence>MDNYTYSELLKSLQNKCDNIALIIKPEKIKQELERIEKEQEDPNFWQDVLKARDTNKEKVRLNRLLETYQKTKNSLDESVELFELAQNDNDEVTLSLLYEEAPILENSVQKVEIEIMLSGENDASNAIITIQPGAGGTESQDWASILYRMYLRWAERRGFKSEILDYQDGEEAGIKGVAFIIKGENAYGYLKNENGVHRLVRISPFDANAKRHTSFASVQISPELDDDIDIEIDEKDVRYDYYRSSGAGGQHVNKTESAVRITHFPTGIVVQCQNDRSQHKNKASALKMLKSKLYELELEKQQSSAKNEEKSEIGWGHQIRSYVLAPYQQVKDARSNTAYSNVEAILDGDIDAILEGVLIAKA</sequence>
<proteinExistence type="inferred from homology"/>
<organism>
    <name type="scientific">Helicobacter pylori (strain ATCC 700392 / 26695)</name>
    <name type="common">Campylobacter pylori</name>
    <dbReference type="NCBI Taxonomy" id="85962"/>
    <lineage>
        <taxon>Bacteria</taxon>
        <taxon>Pseudomonadati</taxon>
        <taxon>Campylobacterota</taxon>
        <taxon>Epsilonproteobacteria</taxon>
        <taxon>Campylobacterales</taxon>
        <taxon>Helicobacteraceae</taxon>
        <taxon>Helicobacter</taxon>
    </lineage>
</organism>
<comment type="function">
    <text evidence="1">Peptide chain release factor 2 directs the termination of translation in response to the peptide chain termination codons UGA and UAA.</text>
</comment>
<comment type="subcellular location">
    <subcellularLocation>
        <location evidence="1">Cytoplasm</location>
    </subcellularLocation>
</comment>
<comment type="PTM">
    <text evidence="1">Methylated by PrmC. Methylation increases the termination efficiency of RF2 (By similarity).</text>
</comment>
<comment type="similarity">
    <text evidence="2">Belongs to the prokaryotic/mitochondrial release factor family.</text>
</comment>
<dbReference type="EMBL" id="AE000511">
    <property type="protein sequence ID" value="AAD07236.1"/>
    <property type="molecule type" value="Genomic_DNA"/>
</dbReference>
<dbReference type="PIR" id="C64541">
    <property type="entry name" value="C64541"/>
</dbReference>
<dbReference type="RefSeq" id="NP_206970.1">
    <property type="nucleotide sequence ID" value="NC_000915.1"/>
</dbReference>
<dbReference type="RefSeq" id="WP_000371130.1">
    <property type="nucleotide sequence ID" value="NC_018939.1"/>
</dbReference>
<dbReference type="SMR" id="P55999"/>
<dbReference type="FunCoup" id="P55999">
    <property type="interactions" value="342"/>
</dbReference>
<dbReference type="STRING" id="85962.HP_0171"/>
<dbReference type="PaxDb" id="85962-C694_00845"/>
<dbReference type="EnsemblBacteria" id="AAD07236">
    <property type="protein sequence ID" value="AAD07236"/>
    <property type="gene ID" value="HP_0171"/>
</dbReference>
<dbReference type="KEGG" id="heo:C694_00845"/>
<dbReference type="KEGG" id="hpy:HP_0171"/>
<dbReference type="PATRIC" id="fig|85962.47.peg.184"/>
<dbReference type="eggNOG" id="COG1186">
    <property type="taxonomic scope" value="Bacteria"/>
</dbReference>
<dbReference type="InParanoid" id="P55999"/>
<dbReference type="OrthoDB" id="9806673at2"/>
<dbReference type="PhylomeDB" id="P55999"/>
<dbReference type="Proteomes" id="UP000000429">
    <property type="component" value="Chromosome"/>
</dbReference>
<dbReference type="GO" id="GO:0005737">
    <property type="term" value="C:cytoplasm"/>
    <property type="evidence" value="ECO:0007669"/>
    <property type="project" value="UniProtKB-SubCell"/>
</dbReference>
<dbReference type="GO" id="GO:0016149">
    <property type="term" value="F:translation release factor activity, codon specific"/>
    <property type="evidence" value="ECO:0007669"/>
    <property type="project" value="UniProtKB-UniRule"/>
</dbReference>
<dbReference type="FunFam" id="3.30.160.20:FF:000010">
    <property type="entry name" value="Peptide chain release factor 2"/>
    <property type="match status" value="1"/>
</dbReference>
<dbReference type="Gene3D" id="3.30.160.20">
    <property type="match status" value="1"/>
</dbReference>
<dbReference type="Gene3D" id="3.30.70.1660">
    <property type="match status" value="1"/>
</dbReference>
<dbReference type="Gene3D" id="1.20.58.410">
    <property type="entry name" value="Release factor"/>
    <property type="match status" value="1"/>
</dbReference>
<dbReference type="HAMAP" id="MF_00094">
    <property type="entry name" value="Rel_fac_2"/>
    <property type="match status" value="1"/>
</dbReference>
<dbReference type="InterPro" id="IPR005139">
    <property type="entry name" value="PCRF"/>
</dbReference>
<dbReference type="InterPro" id="IPR000352">
    <property type="entry name" value="Pep_chain_release_fac_I"/>
</dbReference>
<dbReference type="InterPro" id="IPR045853">
    <property type="entry name" value="Pep_chain_release_fac_I_sf"/>
</dbReference>
<dbReference type="InterPro" id="IPR004374">
    <property type="entry name" value="PrfB"/>
</dbReference>
<dbReference type="NCBIfam" id="TIGR00020">
    <property type="entry name" value="prfB"/>
    <property type="match status" value="1"/>
</dbReference>
<dbReference type="PANTHER" id="PTHR43116:SF3">
    <property type="entry name" value="CLASS I PEPTIDE CHAIN RELEASE FACTOR"/>
    <property type="match status" value="1"/>
</dbReference>
<dbReference type="PANTHER" id="PTHR43116">
    <property type="entry name" value="PEPTIDE CHAIN RELEASE FACTOR 2"/>
    <property type="match status" value="1"/>
</dbReference>
<dbReference type="Pfam" id="PF03462">
    <property type="entry name" value="PCRF"/>
    <property type="match status" value="1"/>
</dbReference>
<dbReference type="Pfam" id="PF00472">
    <property type="entry name" value="RF-1"/>
    <property type="match status" value="1"/>
</dbReference>
<dbReference type="SMART" id="SM00937">
    <property type="entry name" value="PCRF"/>
    <property type="match status" value="1"/>
</dbReference>
<dbReference type="SUPFAM" id="SSF75620">
    <property type="entry name" value="Release factor"/>
    <property type="match status" value="1"/>
</dbReference>
<dbReference type="PROSITE" id="PS00745">
    <property type="entry name" value="RF_PROK_I"/>
    <property type="match status" value="1"/>
</dbReference>
<gene>
    <name type="primary">prfB</name>
    <name type="ordered locus">HP_0171</name>
</gene>
<name>RF2_HELPY</name>
<evidence type="ECO:0000250" key="1"/>
<evidence type="ECO:0000305" key="2"/>
<keyword id="KW-0963">Cytoplasm</keyword>
<keyword id="KW-0488">Methylation</keyword>
<keyword id="KW-0648">Protein biosynthesis</keyword>
<keyword id="KW-1185">Reference proteome</keyword>
<accession>P55999</accession>
<protein>
    <recommendedName>
        <fullName>Peptide chain release factor 2</fullName>
        <shortName>RF-2</shortName>
    </recommendedName>
</protein>